<name>EIF3F_ASPOR</name>
<gene>
    <name type="ORF">AO090005001590</name>
</gene>
<organism>
    <name type="scientific">Aspergillus oryzae (strain ATCC 42149 / RIB 40)</name>
    <name type="common">Yellow koji mold</name>
    <dbReference type="NCBI Taxonomy" id="510516"/>
    <lineage>
        <taxon>Eukaryota</taxon>
        <taxon>Fungi</taxon>
        <taxon>Dikarya</taxon>
        <taxon>Ascomycota</taxon>
        <taxon>Pezizomycotina</taxon>
        <taxon>Eurotiomycetes</taxon>
        <taxon>Eurotiomycetidae</taxon>
        <taxon>Eurotiales</taxon>
        <taxon>Aspergillaceae</taxon>
        <taxon>Aspergillus</taxon>
        <taxon>Aspergillus subgen. Circumdati</taxon>
    </lineage>
</organism>
<proteinExistence type="inferred from homology"/>
<keyword id="KW-0963">Cytoplasm</keyword>
<keyword id="KW-0396">Initiation factor</keyword>
<keyword id="KW-0648">Protein biosynthesis</keyword>
<keyword id="KW-1185">Reference proteome</keyword>
<feature type="chain" id="PRO_0000364325" description="Eukaryotic translation initiation factor 3 subunit F">
    <location>
        <begin position="1"/>
        <end position="345"/>
    </location>
</feature>
<feature type="domain" description="MPN" evidence="2">
    <location>
        <begin position="30"/>
        <end position="166"/>
    </location>
</feature>
<feature type="region of interest" description="Disordered" evidence="3">
    <location>
        <begin position="308"/>
        <end position="345"/>
    </location>
</feature>
<feature type="compositionally biased region" description="Gly residues" evidence="3">
    <location>
        <begin position="318"/>
        <end position="331"/>
    </location>
</feature>
<feature type="compositionally biased region" description="Basic and acidic residues" evidence="3">
    <location>
        <begin position="335"/>
        <end position="345"/>
    </location>
</feature>
<reference key="1">
    <citation type="journal article" date="2005" name="Nature">
        <title>Genome sequencing and analysis of Aspergillus oryzae.</title>
        <authorList>
            <person name="Machida M."/>
            <person name="Asai K."/>
            <person name="Sano M."/>
            <person name="Tanaka T."/>
            <person name="Kumagai T."/>
            <person name="Terai G."/>
            <person name="Kusumoto K."/>
            <person name="Arima T."/>
            <person name="Akita O."/>
            <person name="Kashiwagi Y."/>
            <person name="Abe K."/>
            <person name="Gomi K."/>
            <person name="Horiuchi H."/>
            <person name="Kitamoto K."/>
            <person name="Kobayashi T."/>
            <person name="Takeuchi M."/>
            <person name="Denning D.W."/>
            <person name="Galagan J.E."/>
            <person name="Nierman W.C."/>
            <person name="Yu J."/>
            <person name="Archer D.B."/>
            <person name="Bennett J.W."/>
            <person name="Bhatnagar D."/>
            <person name="Cleveland T.E."/>
            <person name="Fedorova N.D."/>
            <person name="Gotoh O."/>
            <person name="Horikawa H."/>
            <person name="Hosoyama A."/>
            <person name="Ichinomiya M."/>
            <person name="Igarashi R."/>
            <person name="Iwashita K."/>
            <person name="Juvvadi P.R."/>
            <person name="Kato M."/>
            <person name="Kato Y."/>
            <person name="Kin T."/>
            <person name="Kokubun A."/>
            <person name="Maeda H."/>
            <person name="Maeyama N."/>
            <person name="Maruyama J."/>
            <person name="Nagasaki H."/>
            <person name="Nakajima T."/>
            <person name="Oda K."/>
            <person name="Okada K."/>
            <person name="Paulsen I."/>
            <person name="Sakamoto K."/>
            <person name="Sawano T."/>
            <person name="Takahashi M."/>
            <person name="Takase K."/>
            <person name="Terabayashi Y."/>
            <person name="Wortman J.R."/>
            <person name="Yamada O."/>
            <person name="Yamagata Y."/>
            <person name="Anazawa H."/>
            <person name="Hata Y."/>
            <person name="Koide Y."/>
            <person name="Komori T."/>
            <person name="Koyama Y."/>
            <person name="Minetoki T."/>
            <person name="Suharnan S."/>
            <person name="Tanaka A."/>
            <person name="Isono K."/>
            <person name="Kuhara S."/>
            <person name="Ogasawara N."/>
            <person name="Kikuchi H."/>
        </authorList>
    </citation>
    <scope>NUCLEOTIDE SEQUENCE [LARGE SCALE GENOMIC DNA]</scope>
    <source>
        <strain>ATCC 42149 / RIB 40</strain>
    </source>
</reference>
<accession>Q2UPM0</accession>
<dbReference type="EMBL" id="BA000049">
    <property type="protein sequence ID" value="BAE56495.1"/>
    <property type="molecule type" value="Genomic_DNA"/>
</dbReference>
<dbReference type="RefSeq" id="XP_001818497.1">
    <property type="nucleotide sequence ID" value="XM_001818445.3"/>
</dbReference>
<dbReference type="SMR" id="Q2UPM0"/>
<dbReference type="STRING" id="510516.Q2UPM0"/>
<dbReference type="EnsemblFungi" id="BAE56495">
    <property type="protein sequence ID" value="BAE56495"/>
    <property type="gene ID" value="AO090005001590"/>
</dbReference>
<dbReference type="GeneID" id="5990442"/>
<dbReference type="KEGG" id="aor:AO090005001590"/>
<dbReference type="VEuPathDB" id="FungiDB:AO090005001590"/>
<dbReference type="HOGENOM" id="CLU_027018_0_0_1"/>
<dbReference type="OMA" id="EYFVHFH"/>
<dbReference type="OrthoDB" id="92838at5052"/>
<dbReference type="Proteomes" id="UP000006564">
    <property type="component" value="Chromosome 1"/>
</dbReference>
<dbReference type="GO" id="GO:0016282">
    <property type="term" value="C:eukaryotic 43S preinitiation complex"/>
    <property type="evidence" value="ECO:0007669"/>
    <property type="project" value="UniProtKB-UniRule"/>
</dbReference>
<dbReference type="GO" id="GO:0033290">
    <property type="term" value="C:eukaryotic 48S preinitiation complex"/>
    <property type="evidence" value="ECO:0007669"/>
    <property type="project" value="UniProtKB-UniRule"/>
</dbReference>
<dbReference type="GO" id="GO:0071540">
    <property type="term" value="C:eukaryotic translation initiation factor 3 complex, eIF3e"/>
    <property type="evidence" value="ECO:0007669"/>
    <property type="project" value="EnsemblFungi"/>
</dbReference>
<dbReference type="GO" id="GO:0071541">
    <property type="term" value="C:eukaryotic translation initiation factor 3 complex, eIF3m"/>
    <property type="evidence" value="ECO:0007669"/>
    <property type="project" value="EnsemblFungi"/>
</dbReference>
<dbReference type="GO" id="GO:0008237">
    <property type="term" value="F:metallopeptidase activity"/>
    <property type="evidence" value="ECO:0007669"/>
    <property type="project" value="InterPro"/>
</dbReference>
<dbReference type="GO" id="GO:0003743">
    <property type="term" value="F:translation initiation factor activity"/>
    <property type="evidence" value="ECO:0007669"/>
    <property type="project" value="UniProtKB-UniRule"/>
</dbReference>
<dbReference type="GO" id="GO:0031369">
    <property type="term" value="F:translation initiation factor binding"/>
    <property type="evidence" value="ECO:0007669"/>
    <property type="project" value="InterPro"/>
</dbReference>
<dbReference type="GO" id="GO:0001732">
    <property type="term" value="P:formation of cytoplasmic translation initiation complex"/>
    <property type="evidence" value="ECO:0007669"/>
    <property type="project" value="UniProtKB-UniRule"/>
</dbReference>
<dbReference type="CDD" id="cd08064">
    <property type="entry name" value="MPN_eIF3f"/>
    <property type="match status" value="1"/>
</dbReference>
<dbReference type="FunFam" id="3.40.140.10:FF:000019">
    <property type="entry name" value="Eukaryotic translation initiation factor 3 subunit F"/>
    <property type="match status" value="1"/>
</dbReference>
<dbReference type="Gene3D" id="3.40.140.10">
    <property type="entry name" value="Cytidine Deaminase, domain 2"/>
    <property type="match status" value="1"/>
</dbReference>
<dbReference type="HAMAP" id="MF_03005">
    <property type="entry name" value="eIF3f"/>
    <property type="match status" value="1"/>
</dbReference>
<dbReference type="InterPro" id="IPR027531">
    <property type="entry name" value="eIF3f"/>
</dbReference>
<dbReference type="InterPro" id="IPR024969">
    <property type="entry name" value="EIF3F/CSN6-like_C"/>
</dbReference>
<dbReference type="InterPro" id="IPR000555">
    <property type="entry name" value="JAMM/MPN+_dom"/>
</dbReference>
<dbReference type="InterPro" id="IPR037518">
    <property type="entry name" value="MPN"/>
</dbReference>
<dbReference type="PANTHER" id="PTHR10540:SF6">
    <property type="entry name" value="EUKARYOTIC TRANSLATION INITIATION FACTOR 3 SUBUNIT F"/>
    <property type="match status" value="1"/>
</dbReference>
<dbReference type="PANTHER" id="PTHR10540">
    <property type="entry name" value="EUKARYOTIC TRANSLATION INITIATION FACTOR 3 SUBUNIT F-RELATED"/>
    <property type="match status" value="1"/>
</dbReference>
<dbReference type="Pfam" id="PF01398">
    <property type="entry name" value="JAB"/>
    <property type="match status" value="1"/>
</dbReference>
<dbReference type="Pfam" id="PF13012">
    <property type="entry name" value="MitMem_reg"/>
    <property type="match status" value="1"/>
</dbReference>
<dbReference type="SMART" id="SM00232">
    <property type="entry name" value="JAB_MPN"/>
    <property type="match status" value="1"/>
</dbReference>
<dbReference type="PROSITE" id="PS50249">
    <property type="entry name" value="MPN"/>
    <property type="match status" value="1"/>
</dbReference>
<protein>
    <recommendedName>
        <fullName evidence="1">Eukaryotic translation initiation factor 3 subunit F</fullName>
        <shortName evidence="1">eIF3f</shortName>
    </recommendedName>
</protein>
<sequence length="345" mass="37203">MAETDSFLHLARPLGPMAVGSAPTTAPLNVVIHPQALFSILDHSLRRNADQERVIGTLLGTRSEDGTEVEIRTTFAVGHTETTDQVEVDMEYQKQMLALHLKANPKEVLVGWYATSSELNTFSALIQNFYSGQGDGTFPHPAVHLTVSTEPGKDVETRAYISAPVGVTAERAADSAAFIPVPYEIRYGETEKSGLESIAAARDVESRAANIFTDIEALERAVEEVLGMIDRVSKYVESVIDEEAPASTALGQFLLNALALAPKVEPADIERDFNNHIQDVLVVSYLANTIRTQMELSNRLATAQLTLGGESGNAESGQRGGQRGGKGGRGGQQRTQDRSGEEARA</sequence>
<evidence type="ECO:0000255" key="1">
    <source>
        <dbReference type="HAMAP-Rule" id="MF_03005"/>
    </source>
</evidence>
<evidence type="ECO:0000255" key="2">
    <source>
        <dbReference type="PROSITE-ProRule" id="PRU01182"/>
    </source>
</evidence>
<evidence type="ECO:0000256" key="3">
    <source>
        <dbReference type="SAM" id="MobiDB-lite"/>
    </source>
</evidence>
<comment type="function">
    <text evidence="1">Component of the eukaryotic translation initiation factor 3 (eIF-3) complex, which is involved in protein synthesis of a specialized repertoire of mRNAs and, together with other initiation factors, stimulates binding of mRNA and methionyl-tRNAi to the 40S ribosome. The eIF-3 complex specifically targets and initiates translation of a subset of mRNAs involved in cell proliferation.</text>
</comment>
<comment type="subunit">
    <text evidence="1">Component of the eukaryotic translation initiation factor 3 (eIF-3) complex.</text>
</comment>
<comment type="subcellular location">
    <subcellularLocation>
        <location evidence="1">Cytoplasm</location>
    </subcellularLocation>
</comment>
<comment type="similarity">
    <text evidence="1">Belongs to the eIF-3 subunit F family.</text>
</comment>